<comment type="function">
    <text evidence="2">Receptor for interleukin-8 which is a powerful neutrophil chemotactic factor. Binding of IL-8 to the receptor causes activation of neutrophils. This response is mediated via a G-protein that activates a phosphatidylinositol-calcium second messenger system. Binds to IL-8 with high affinity. Also binds with high affinity to CXCL3, GRO/MGSA and NAP-2.</text>
</comment>
<comment type="subunit">
    <text evidence="2">Interacts with IL8. Interacts with GNAI2.</text>
</comment>
<comment type="subcellular location">
    <subcellularLocation>
        <location>Cell membrane</location>
        <topology>Multi-pass membrane protein</topology>
    </subcellularLocation>
</comment>
<comment type="PTM">
    <text evidence="1">Phosphorylated upon ligand binding; which is required for desensitization.</text>
</comment>
<comment type="similarity">
    <text evidence="4">Belongs to the G-protein coupled receptor 1 family.</text>
</comment>
<organism>
    <name type="scientific">Bos taurus</name>
    <name type="common">Bovine</name>
    <dbReference type="NCBI Taxonomy" id="9913"/>
    <lineage>
        <taxon>Eukaryota</taxon>
        <taxon>Metazoa</taxon>
        <taxon>Chordata</taxon>
        <taxon>Craniata</taxon>
        <taxon>Vertebrata</taxon>
        <taxon>Euteleostomi</taxon>
        <taxon>Mammalia</taxon>
        <taxon>Eutheria</taxon>
        <taxon>Laurasiatheria</taxon>
        <taxon>Artiodactyla</taxon>
        <taxon>Ruminantia</taxon>
        <taxon>Pecora</taxon>
        <taxon>Bovidae</taxon>
        <taxon>Bovinae</taxon>
        <taxon>Bos</taxon>
    </lineage>
</organism>
<sequence length="360" mass="40625">MTIILKDLSNSSILWEGFEDEFGNYSGTPPTEDYDYSPCEISTETLNKYAVVVIDALVFLLSLLGNSLVMLVILYSRIGRSVTDVYLLNLAMADLLFAMTLPIWTASKAKGWVFGTPLCKVVSLLKEVNFYSGILLLACISMDRYLAIVHATRTLTQKWHWVKFICLGIWALSVILALPIFIFREAYQPPYSDLVCYEDLGANTTKWRMIMRVLPQTFGFLLPLLVMLFCYGFTLRTLFSAQMGHKHRAMRVIFAVVLVFLLCWLPYNLVLIADTLMRAHVIAETCQRRNDIGRALDATEILGFLHSCLNPLIYVFIGQKFRHGLLKIMAIHGLISKEFLAKDGRPSFVGSSSGNTSTTL</sequence>
<proteinExistence type="evidence at transcript level"/>
<reference key="1">
    <citation type="submission" date="1996-01" db="EMBL/GenBank/DDBJ databases">
        <authorList>
            <person name="Li Y."/>
            <person name="Feng J."/>
            <person name="Templeton J.W."/>
        </authorList>
    </citation>
    <scope>NUCLEOTIDE SEQUENCE [MRNA]</scope>
</reference>
<dbReference type="EMBL" id="U19947">
    <property type="protein sequence ID" value="AAA84996.1"/>
    <property type="molecule type" value="mRNA"/>
</dbReference>
<dbReference type="RefSeq" id="NP_776785.1">
    <property type="nucleotide sequence ID" value="NM_174360.2"/>
</dbReference>
<dbReference type="SMR" id="Q28003"/>
<dbReference type="FunCoup" id="Q28003">
    <property type="interactions" value="443"/>
</dbReference>
<dbReference type="STRING" id="9913.ENSBTAP00000056463"/>
<dbReference type="GlyCosmos" id="Q28003">
    <property type="glycosylation" value="2 sites, No reported glycans"/>
</dbReference>
<dbReference type="GlyGen" id="Q28003">
    <property type="glycosylation" value="2 sites"/>
</dbReference>
<dbReference type="PaxDb" id="9913-ENSBTAP00000056463"/>
<dbReference type="GeneID" id="281863"/>
<dbReference type="KEGG" id="bta:281863"/>
<dbReference type="CTD" id="3577"/>
<dbReference type="eggNOG" id="KOG3656">
    <property type="taxonomic scope" value="Eukaryota"/>
</dbReference>
<dbReference type="InParanoid" id="Q28003"/>
<dbReference type="OrthoDB" id="9946013at2759"/>
<dbReference type="Proteomes" id="UP000009136">
    <property type="component" value="Unplaced"/>
</dbReference>
<dbReference type="GO" id="GO:0009897">
    <property type="term" value="C:external side of plasma membrane"/>
    <property type="evidence" value="ECO:0000318"/>
    <property type="project" value="GO_Central"/>
</dbReference>
<dbReference type="GO" id="GO:0019957">
    <property type="term" value="F:C-C chemokine binding"/>
    <property type="evidence" value="ECO:0000318"/>
    <property type="project" value="GO_Central"/>
</dbReference>
<dbReference type="GO" id="GO:0016493">
    <property type="term" value="F:C-C chemokine receptor activity"/>
    <property type="evidence" value="ECO:0000318"/>
    <property type="project" value="GO_Central"/>
</dbReference>
<dbReference type="GO" id="GO:0016494">
    <property type="term" value="F:C-X-C chemokine receptor activity"/>
    <property type="evidence" value="ECO:0007669"/>
    <property type="project" value="InterPro"/>
</dbReference>
<dbReference type="GO" id="GO:0019959">
    <property type="term" value="F:interleukin-8 binding"/>
    <property type="evidence" value="ECO:0007669"/>
    <property type="project" value="InterPro"/>
</dbReference>
<dbReference type="GO" id="GO:0019722">
    <property type="term" value="P:calcium-mediated signaling"/>
    <property type="evidence" value="ECO:0000318"/>
    <property type="project" value="GO_Central"/>
</dbReference>
<dbReference type="GO" id="GO:0006955">
    <property type="term" value="P:immune response"/>
    <property type="evidence" value="ECO:0000318"/>
    <property type="project" value="GO_Central"/>
</dbReference>
<dbReference type="GO" id="GO:0030593">
    <property type="term" value="P:neutrophil chemotaxis"/>
    <property type="evidence" value="ECO:0000318"/>
    <property type="project" value="GO_Central"/>
</dbReference>
<dbReference type="GO" id="GO:0007204">
    <property type="term" value="P:positive regulation of cytosolic calcium ion concentration"/>
    <property type="evidence" value="ECO:0000318"/>
    <property type="project" value="GO_Central"/>
</dbReference>
<dbReference type="CDD" id="cd15178">
    <property type="entry name" value="7tmA_CXCR1_2"/>
    <property type="match status" value="1"/>
</dbReference>
<dbReference type="FunFam" id="1.20.1070.10:FF:000157">
    <property type="entry name" value="C-X-C chemokine receptor type 2"/>
    <property type="match status" value="1"/>
</dbReference>
<dbReference type="Gene3D" id="1.20.1070.10">
    <property type="entry name" value="Rhodopsin 7-helix transmembrane proteins"/>
    <property type="match status" value="1"/>
</dbReference>
<dbReference type="InterPro" id="IPR050119">
    <property type="entry name" value="CCR1-9-like"/>
</dbReference>
<dbReference type="InterPro" id="IPR001355">
    <property type="entry name" value="Chemokine_CXCR1"/>
</dbReference>
<dbReference type="InterPro" id="IPR000174">
    <property type="entry name" value="Chemokine_CXCR_1/2"/>
</dbReference>
<dbReference type="InterPro" id="IPR000276">
    <property type="entry name" value="GPCR_Rhodpsn"/>
</dbReference>
<dbReference type="InterPro" id="IPR017452">
    <property type="entry name" value="GPCR_Rhodpsn_7TM"/>
</dbReference>
<dbReference type="PANTHER" id="PTHR10489:SF689">
    <property type="entry name" value="C-X-C CHEMOKINE RECEPTOR TYPE 2"/>
    <property type="match status" value="1"/>
</dbReference>
<dbReference type="PANTHER" id="PTHR10489">
    <property type="entry name" value="CELL ADHESION MOLECULE"/>
    <property type="match status" value="1"/>
</dbReference>
<dbReference type="Pfam" id="PF00001">
    <property type="entry name" value="7tm_1"/>
    <property type="match status" value="1"/>
</dbReference>
<dbReference type="PRINTS" id="PR00237">
    <property type="entry name" value="GPCRRHODOPSN"/>
</dbReference>
<dbReference type="PRINTS" id="PR00427">
    <property type="entry name" value="INTRLEUKIN8R"/>
</dbReference>
<dbReference type="PRINTS" id="PR00572">
    <property type="entry name" value="INTRLEUKN8AR"/>
</dbReference>
<dbReference type="SUPFAM" id="SSF81321">
    <property type="entry name" value="Family A G protein-coupled receptor-like"/>
    <property type="match status" value="1"/>
</dbReference>
<dbReference type="PROSITE" id="PS00237">
    <property type="entry name" value="G_PROTEIN_RECEP_F1_1"/>
    <property type="match status" value="1"/>
</dbReference>
<dbReference type="PROSITE" id="PS50262">
    <property type="entry name" value="G_PROTEIN_RECEP_F1_2"/>
    <property type="match status" value="1"/>
</dbReference>
<accession>Q28003</accession>
<evidence type="ECO:0000250" key="1"/>
<evidence type="ECO:0000250" key="2">
    <source>
        <dbReference type="UniProtKB" id="P25025"/>
    </source>
</evidence>
<evidence type="ECO:0000255" key="3"/>
<evidence type="ECO:0000255" key="4">
    <source>
        <dbReference type="PROSITE-ProRule" id="PRU00521"/>
    </source>
</evidence>
<protein>
    <recommendedName>
        <fullName>C-X-C chemokine receptor type 2</fullName>
        <shortName>CXC-R2</shortName>
        <shortName>CXCR-2</shortName>
    </recommendedName>
    <alternativeName>
        <fullName>High affinity interleukin-8 receptor B</fullName>
        <shortName>IL-8R B</shortName>
    </alternativeName>
    <cdAntigenName>CD182</cdAntigenName>
</protein>
<feature type="chain" id="PRO_0000069334" description="C-X-C chemokine receptor type 2">
    <location>
        <begin position="1"/>
        <end position="360"/>
    </location>
</feature>
<feature type="topological domain" description="Extracellular" evidence="3">
    <location>
        <begin position="1"/>
        <end position="48"/>
    </location>
</feature>
<feature type="transmembrane region" description="Helical; Name=1" evidence="3">
    <location>
        <begin position="49"/>
        <end position="75"/>
    </location>
</feature>
<feature type="topological domain" description="Cytoplasmic" evidence="3">
    <location>
        <begin position="76"/>
        <end position="84"/>
    </location>
</feature>
<feature type="transmembrane region" description="Helical; Name=2" evidence="3">
    <location>
        <begin position="85"/>
        <end position="105"/>
    </location>
</feature>
<feature type="topological domain" description="Extracellular" evidence="3">
    <location>
        <begin position="106"/>
        <end position="120"/>
    </location>
</feature>
<feature type="transmembrane region" description="Helical; Name=3" evidence="3">
    <location>
        <begin position="121"/>
        <end position="142"/>
    </location>
</feature>
<feature type="topological domain" description="Cytoplasmic" evidence="3">
    <location>
        <begin position="143"/>
        <end position="163"/>
    </location>
</feature>
<feature type="transmembrane region" description="Helical; Name=4" evidence="3">
    <location>
        <begin position="164"/>
        <end position="183"/>
    </location>
</feature>
<feature type="topological domain" description="Extracellular" evidence="3">
    <location>
        <begin position="184"/>
        <end position="208"/>
    </location>
</feature>
<feature type="transmembrane region" description="Helical; Name=5" evidence="3">
    <location>
        <begin position="209"/>
        <end position="231"/>
    </location>
</feature>
<feature type="topological domain" description="Cytoplasmic" evidence="3">
    <location>
        <begin position="232"/>
        <end position="251"/>
    </location>
</feature>
<feature type="transmembrane region" description="Helical; Name=6" evidence="3">
    <location>
        <begin position="252"/>
        <end position="273"/>
    </location>
</feature>
<feature type="topological domain" description="Extracellular" evidence="3">
    <location>
        <begin position="274"/>
        <end position="294"/>
    </location>
</feature>
<feature type="transmembrane region" description="Helical; Name=7" evidence="3">
    <location>
        <begin position="295"/>
        <end position="315"/>
    </location>
</feature>
<feature type="topological domain" description="Cytoplasmic" evidence="3">
    <location>
        <begin position="316"/>
        <end position="360"/>
    </location>
</feature>
<feature type="glycosylation site" description="N-linked (GlcNAc...) asparagine" evidence="3">
    <location>
        <position position="10"/>
    </location>
</feature>
<feature type="glycosylation site" description="N-linked (GlcNAc...) asparagine" evidence="3">
    <location>
        <position position="24"/>
    </location>
</feature>
<feature type="disulfide bond" evidence="4">
    <location>
        <begin position="119"/>
        <end position="196"/>
    </location>
</feature>
<keyword id="KW-1003">Cell membrane</keyword>
<keyword id="KW-0145">Chemotaxis</keyword>
<keyword id="KW-1015">Disulfide bond</keyword>
<keyword id="KW-0297">G-protein coupled receptor</keyword>
<keyword id="KW-0325">Glycoprotein</keyword>
<keyword id="KW-0472">Membrane</keyword>
<keyword id="KW-0597">Phosphoprotein</keyword>
<keyword id="KW-0675">Receptor</keyword>
<keyword id="KW-1185">Reference proteome</keyword>
<keyword id="KW-0807">Transducer</keyword>
<keyword id="KW-0812">Transmembrane</keyword>
<keyword id="KW-1133">Transmembrane helix</keyword>
<gene>
    <name type="primary">CXCR2</name>
    <name type="synonym">IL8RB</name>
</gene>
<name>CXCR2_BOVIN</name>